<comment type="function">
    <text evidence="1">General (non sugar-specific) component of the phosphoenolpyruvate-dependent sugar phosphotransferase system (sugar PTS). This major carbohydrate active-transport system catalyzes the phosphorylation of incoming sugar substrates concomitantly with their translocation across the cell membrane. The phosphoryl group from phosphoenolpyruvate (PEP) is transferred to the phosphoryl carrier protein HPr by enzyme I. Phospho-HPr then transfers it to the PTS EIIA domain.</text>
</comment>
<comment type="function">
    <text evidence="1">P-Ser-HPr interacts with the catabolite control protein A (CcpA), forming a complex that binds to DNA at the catabolite response elements cre, operator sites preceding a large number of catabolite-regulated genes. Thus, P-Ser-HPr is a corepressor in carbon catabolite repression (CCR), a mechanism that allows bacteria to coordinate and optimize the utilization of available carbon sources. P-Ser-HPr also plays a role in inducer exclusion, in which it probably interacts with several non-PTS permeases and inhibits their transport activity (By similarity).</text>
</comment>
<comment type="activity regulation">
    <text evidence="1">Phosphorylation on Ser-46 inhibits the phosphoryl transfer from enzyme I to HPr.</text>
</comment>
<comment type="subcellular location">
    <subcellularLocation>
        <location evidence="1">Cytoplasm</location>
    </subcellularLocation>
</comment>
<comment type="similarity">
    <text evidence="3">Belongs to the HPr family.</text>
</comment>
<organism>
    <name type="scientific">Latilactobacillus sakei</name>
    <name type="common">Lactobacillus sakei</name>
    <dbReference type="NCBI Taxonomy" id="1599"/>
    <lineage>
        <taxon>Bacteria</taxon>
        <taxon>Bacillati</taxon>
        <taxon>Bacillota</taxon>
        <taxon>Bacilli</taxon>
        <taxon>Lactobacillales</taxon>
        <taxon>Lactobacillaceae</taxon>
        <taxon>Latilactobacillus</taxon>
    </lineage>
</organism>
<protein>
    <recommendedName>
        <fullName>Phosphocarrier protein HPr</fullName>
    </recommendedName>
    <alternativeName>
        <fullName>Histidine-containing protein</fullName>
    </alternativeName>
</protein>
<dbReference type="EMBL" id="U82366">
    <property type="protein sequence ID" value="AAC45390.1"/>
    <property type="molecule type" value="Genomic_DNA"/>
</dbReference>
<dbReference type="RefSeq" id="WP_004265632.1">
    <property type="nucleotide sequence ID" value="NZ_VSTE01000003.1"/>
</dbReference>
<dbReference type="SMR" id="O07125"/>
<dbReference type="OMA" id="AEVWVTR"/>
<dbReference type="GO" id="GO:0005737">
    <property type="term" value="C:cytoplasm"/>
    <property type="evidence" value="ECO:0007669"/>
    <property type="project" value="UniProtKB-SubCell"/>
</dbReference>
<dbReference type="GO" id="GO:0009401">
    <property type="term" value="P:phosphoenolpyruvate-dependent sugar phosphotransferase system"/>
    <property type="evidence" value="ECO:0007669"/>
    <property type="project" value="UniProtKB-KW"/>
</dbReference>
<dbReference type="CDD" id="cd00367">
    <property type="entry name" value="PTS-HPr_like"/>
    <property type="match status" value="1"/>
</dbReference>
<dbReference type="Gene3D" id="3.30.1340.10">
    <property type="entry name" value="HPr-like"/>
    <property type="match status" value="1"/>
</dbReference>
<dbReference type="InterPro" id="IPR050399">
    <property type="entry name" value="HPr"/>
</dbReference>
<dbReference type="InterPro" id="IPR000032">
    <property type="entry name" value="HPr-like"/>
</dbReference>
<dbReference type="InterPro" id="IPR035895">
    <property type="entry name" value="HPr-like_sf"/>
</dbReference>
<dbReference type="InterPro" id="IPR001020">
    <property type="entry name" value="PTS_HPr_His_P_site"/>
</dbReference>
<dbReference type="InterPro" id="IPR002114">
    <property type="entry name" value="PTS_HPr_Ser_P_site"/>
</dbReference>
<dbReference type="NCBIfam" id="NF010352">
    <property type="entry name" value="PRK13780.1"/>
    <property type="match status" value="1"/>
</dbReference>
<dbReference type="NCBIfam" id="TIGR01003">
    <property type="entry name" value="PTS_HPr_family"/>
    <property type="match status" value="1"/>
</dbReference>
<dbReference type="PANTHER" id="PTHR33705">
    <property type="entry name" value="PHOSPHOCARRIER PROTEIN HPR"/>
    <property type="match status" value="1"/>
</dbReference>
<dbReference type="PANTHER" id="PTHR33705:SF2">
    <property type="entry name" value="PHOSPHOCARRIER PROTEIN NPR"/>
    <property type="match status" value="1"/>
</dbReference>
<dbReference type="Pfam" id="PF00381">
    <property type="entry name" value="PTS-HPr"/>
    <property type="match status" value="1"/>
</dbReference>
<dbReference type="PRINTS" id="PR00107">
    <property type="entry name" value="PHOSPHOCPHPR"/>
</dbReference>
<dbReference type="SUPFAM" id="SSF55594">
    <property type="entry name" value="HPr-like"/>
    <property type="match status" value="1"/>
</dbReference>
<dbReference type="PROSITE" id="PS51350">
    <property type="entry name" value="PTS_HPR_DOM"/>
    <property type="match status" value="1"/>
</dbReference>
<dbReference type="PROSITE" id="PS00369">
    <property type="entry name" value="PTS_HPR_HIS"/>
    <property type="match status" value="1"/>
</dbReference>
<dbReference type="PROSITE" id="PS00589">
    <property type="entry name" value="PTS_HPR_SER"/>
    <property type="match status" value="1"/>
</dbReference>
<evidence type="ECO:0000250" key="1"/>
<evidence type="ECO:0000255" key="2">
    <source>
        <dbReference type="PROSITE-ProRule" id="PRU00681"/>
    </source>
</evidence>
<evidence type="ECO:0000305" key="3"/>
<gene>
    <name type="primary">ptsH</name>
</gene>
<sequence>MEKRDFHVVADTGIHARPATLLVQTASKFNSDVNLEYKGKSVNLKSIMGVMSLGVGQGADVTISAEGADEADAINAIEETMKKEGLSE</sequence>
<reference key="1">
    <citation type="journal article" date="1997" name="Appl. Environ. Microbiol.">
        <title>Molecular cloning and analysis of the ptsHI operon in Lactobacillus sake.</title>
        <authorList>
            <person name="Stentz R."/>
            <person name="Lauret R."/>
            <person name="Ehrlich S.D."/>
            <person name="Morel-Deville F."/>
            <person name="Zagorec M."/>
        </authorList>
    </citation>
    <scope>NUCLEOTIDE SEQUENCE [GENOMIC DNA]</scope>
    <source>
        <strain>160*1</strain>
    </source>
</reference>
<proteinExistence type="inferred from homology"/>
<feature type="chain" id="PRO_0000107859" description="Phosphocarrier protein HPr">
    <location>
        <begin position="1"/>
        <end position="88"/>
    </location>
</feature>
<feature type="domain" description="HPr" evidence="2">
    <location>
        <begin position="1"/>
        <end position="88"/>
    </location>
</feature>
<feature type="active site" description="Pros-phosphohistidine intermediate" evidence="2">
    <location>
        <position position="15"/>
    </location>
</feature>
<feature type="modified residue" description="Phosphoserine; by HPrK/P" evidence="2">
    <location>
        <position position="46"/>
    </location>
</feature>
<keyword id="KW-0963">Cytoplasm</keyword>
<keyword id="KW-0597">Phosphoprotein</keyword>
<keyword id="KW-0598">Phosphotransferase system</keyword>
<keyword id="KW-0762">Sugar transport</keyword>
<keyword id="KW-0804">Transcription</keyword>
<keyword id="KW-0805">Transcription regulation</keyword>
<keyword id="KW-0813">Transport</keyword>
<name>PTHP_LATSK</name>
<accession>O07125</accession>